<proteinExistence type="inferred from homology"/>
<feature type="signal peptide" description="Tat-type signal" evidence="1">
    <location>
        <begin position="1"/>
        <end position="33"/>
    </location>
</feature>
<feature type="chain" id="PRO_0000256075" description="Periplasmic nitrate reductase" evidence="1">
    <location>
        <begin position="34"/>
        <end position="837"/>
    </location>
</feature>
<feature type="domain" description="4Fe-4S Mo/W bis-MGD-type" evidence="1">
    <location>
        <begin position="44"/>
        <end position="100"/>
    </location>
</feature>
<feature type="binding site" evidence="1">
    <location>
        <position position="51"/>
    </location>
    <ligand>
        <name>[4Fe-4S] cluster</name>
        <dbReference type="ChEBI" id="CHEBI:49883"/>
    </ligand>
</feature>
<feature type="binding site" evidence="1">
    <location>
        <position position="54"/>
    </location>
    <ligand>
        <name>[4Fe-4S] cluster</name>
        <dbReference type="ChEBI" id="CHEBI:49883"/>
    </ligand>
</feature>
<feature type="binding site" evidence="1">
    <location>
        <position position="58"/>
    </location>
    <ligand>
        <name>[4Fe-4S] cluster</name>
        <dbReference type="ChEBI" id="CHEBI:49883"/>
    </ligand>
</feature>
<feature type="binding site" evidence="1">
    <location>
        <position position="86"/>
    </location>
    <ligand>
        <name>[4Fe-4S] cluster</name>
        <dbReference type="ChEBI" id="CHEBI:49883"/>
    </ligand>
</feature>
<feature type="binding site" evidence="1">
    <location>
        <position position="88"/>
    </location>
    <ligand>
        <name>Mo-bis(molybdopterin guanine dinucleotide)</name>
        <dbReference type="ChEBI" id="CHEBI:60539"/>
    </ligand>
</feature>
<feature type="binding site" evidence="1">
    <location>
        <position position="155"/>
    </location>
    <ligand>
        <name>Mo-bis(molybdopterin guanine dinucleotide)</name>
        <dbReference type="ChEBI" id="CHEBI:60539"/>
    </ligand>
</feature>
<feature type="binding site" evidence="1">
    <location>
        <position position="180"/>
    </location>
    <ligand>
        <name>Mo-bis(molybdopterin guanine dinucleotide)</name>
        <dbReference type="ChEBI" id="CHEBI:60539"/>
    </ligand>
</feature>
<feature type="binding site" evidence="1">
    <location>
        <position position="184"/>
    </location>
    <ligand>
        <name>Mo-bis(molybdopterin guanine dinucleotide)</name>
        <dbReference type="ChEBI" id="CHEBI:60539"/>
    </ligand>
</feature>
<feature type="binding site" evidence="1">
    <location>
        <begin position="217"/>
        <end position="224"/>
    </location>
    <ligand>
        <name>Mo-bis(molybdopterin guanine dinucleotide)</name>
        <dbReference type="ChEBI" id="CHEBI:60539"/>
    </ligand>
</feature>
<feature type="binding site" evidence="1">
    <location>
        <begin position="248"/>
        <end position="252"/>
    </location>
    <ligand>
        <name>Mo-bis(molybdopterin guanine dinucleotide)</name>
        <dbReference type="ChEBI" id="CHEBI:60539"/>
    </ligand>
</feature>
<feature type="binding site" evidence="1">
    <location>
        <begin position="267"/>
        <end position="269"/>
    </location>
    <ligand>
        <name>Mo-bis(molybdopterin guanine dinucleotide)</name>
        <dbReference type="ChEBI" id="CHEBI:60539"/>
    </ligand>
</feature>
<feature type="binding site" evidence="1">
    <location>
        <position position="378"/>
    </location>
    <ligand>
        <name>Mo-bis(molybdopterin guanine dinucleotide)</name>
        <dbReference type="ChEBI" id="CHEBI:60539"/>
    </ligand>
</feature>
<feature type="binding site" evidence="1">
    <location>
        <position position="382"/>
    </location>
    <ligand>
        <name>Mo-bis(molybdopterin guanine dinucleotide)</name>
        <dbReference type="ChEBI" id="CHEBI:60539"/>
    </ligand>
</feature>
<feature type="binding site" evidence="1">
    <location>
        <position position="488"/>
    </location>
    <ligand>
        <name>Mo-bis(molybdopterin guanine dinucleotide)</name>
        <dbReference type="ChEBI" id="CHEBI:60539"/>
    </ligand>
</feature>
<feature type="binding site" evidence="1">
    <location>
        <begin position="514"/>
        <end position="515"/>
    </location>
    <ligand>
        <name>Mo-bis(molybdopterin guanine dinucleotide)</name>
        <dbReference type="ChEBI" id="CHEBI:60539"/>
    </ligand>
</feature>
<feature type="binding site" evidence="1">
    <location>
        <position position="537"/>
    </location>
    <ligand>
        <name>Mo-bis(molybdopterin guanine dinucleotide)</name>
        <dbReference type="ChEBI" id="CHEBI:60539"/>
    </ligand>
</feature>
<feature type="binding site" evidence="1">
    <location>
        <position position="564"/>
    </location>
    <ligand>
        <name>Mo-bis(molybdopterin guanine dinucleotide)</name>
        <dbReference type="ChEBI" id="CHEBI:60539"/>
    </ligand>
</feature>
<feature type="binding site" evidence="1">
    <location>
        <begin position="724"/>
        <end position="733"/>
    </location>
    <ligand>
        <name>Mo-bis(molybdopterin guanine dinucleotide)</name>
        <dbReference type="ChEBI" id="CHEBI:60539"/>
    </ligand>
</feature>
<feature type="binding site" evidence="1">
    <location>
        <position position="800"/>
    </location>
    <ligand>
        <name>substrate</name>
    </ligand>
</feature>
<feature type="binding site" evidence="1">
    <location>
        <position position="808"/>
    </location>
    <ligand>
        <name>Mo-bis(molybdopterin guanine dinucleotide)</name>
        <dbReference type="ChEBI" id="CHEBI:60539"/>
    </ligand>
</feature>
<feature type="binding site" evidence="1">
    <location>
        <position position="825"/>
    </location>
    <ligand>
        <name>Mo-bis(molybdopterin guanine dinucleotide)</name>
        <dbReference type="ChEBI" id="CHEBI:60539"/>
    </ligand>
</feature>
<evidence type="ECO:0000255" key="1">
    <source>
        <dbReference type="HAMAP-Rule" id="MF_01630"/>
    </source>
</evidence>
<keyword id="KW-0004">4Fe-4S</keyword>
<keyword id="KW-0249">Electron transport</keyword>
<keyword id="KW-0408">Iron</keyword>
<keyword id="KW-0411">Iron-sulfur</keyword>
<keyword id="KW-0479">Metal-binding</keyword>
<keyword id="KW-0500">Molybdenum</keyword>
<keyword id="KW-0534">Nitrate assimilation</keyword>
<keyword id="KW-0560">Oxidoreductase</keyword>
<keyword id="KW-0574">Periplasm</keyword>
<keyword id="KW-0732">Signal</keyword>
<keyword id="KW-0813">Transport</keyword>
<comment type="function">
    <text evidence="1">Catalytic subunit of the periplasmic nitrate reductase complex NapAB. Receives electrons from NapB and catalyzes the reduction of nitrate to nitrite.</text>
</comment>
<comment type="catalytic activity">
    <reaction evidence="1">
        <text>2 Fe(II)-[cytochrome] + nitrate + 2 H(+) = 2 Fe(III)-[cytochrome] + nitrite + H2O</text>
        <dbReference type="Rhea" id="RHEA:12909"/>
        <dbReference type="Rhea" id="RHEA-COMP:11777"/>
        <dbReference type="Rhea" id="RHEA-COMP:11778"/>
        <dbReference type="ChEBI" id="CHEBI:15377"/>
        <dbReference type="ChEBI" id="CHEBI:15378"/>
        <dbReference type="ChEBI" id="CHEBI:16301"/>
        <dbReference type="ChEBI" id="CHEBI:17632"/>
        <dbReference type="ChEBI" id="CHEBI:29033"/>
        <dbReference type="ChEBI" id="CHEBI:29034"/>
        <dbReference type="EC" id="1.9.6.1"/>
    </reaction>
</comment>
<comment type="cofactor">
    <cofactor evidence="1">
        <name>[4Fe-4S] cluster</name>
        <dbReference type="ChEBI" id="CHEBI:49883"/>
    </cofactor>
    <text evidence="1">Binds 1 [4Fe-4S] cluster.</text>
</comment>
<comment type="cofactor">
    <cofactor evidence="1">
        <name>Mo-bis(molybdopterin guanine dinucleotide)</name>
        <dbReference type="ChEBI" id="CHEBI:60539"/>
    </cofactor>
    <text evidence="1">Binds 1 molybdenum-bis(molybdopterin guanine dinucleotide) (Mo-bis-MGD) cofactor per subunit.</text>
</comment>
<comment type="subunit">
    <text evidence="1">Component of the periplasmic nitrate reductase NapAB complex composed of NapA and NapB.</text>
</comment>
<comment type="subcellular location">
    <subcellularLocation>
        <location evidence="1">Periplasm</location>
    </subcellularLocation>
</comment>
<comment type="PTM">
    <text evidence="1">Predicted to be exported by the Tat system. The position of the signal peptide cleavage has not been experimentally proven.</text>
</comment>
<comment type="similarity">
    <text evidence="1">Belongs to the prokaryotic molybdopterin-containing oxidoreductase family. NasA/NapA/NarB subfamily.</text>
</comment>
<name>NAPA_RHOPB</name>
<organism>
    <name type="scientific">Rhodopseudomonas palustris (strain BisB18)</name>
    <dbReference type="NCBI Taxonomy" id="316056"/>
    <lineage>
        <taxon>Bacteria</taxon>
        <taxon>Pseudomonadati</taxon>
        <taxon>Pseudomonadota</taxon>
        <taxon>Alphaproteobacteria</taxon>
        <taxon>Hyphomicrobiales</taxon>
        <taxon>Nitrobacteraceae</taxon>
        <taxon>Rhodopseudomonas</taxon>
    </lineage>
</organism>
<sequence length="837" mass="93633">MTTPKLDRRQVLKLEAAAMAALAGGIAMPAAAANLVTERAVSELKWDKAACRFCGTGCSVMVATKENRVVATHGDTKSEVNRGLNCVKGYFLSKIMYGHDRLTQPMLRKTDGKYDKNGEFMPVSWDEAFDIMAEKFKAALKKRGPSGVGMFGSGQWTVWEGYAASKLFKAGFRSNNIDPNARHCMASAVAGFMRTFGIDEPMGCYDDIEAADVFVLWGSNMAEMHPLLWTRVTDRRLSAPHVKVAVLSTFEHRSFDLADLGLVFKPQTDLAILNAIANHIIKTGRVNKDFVAKHTTFKRGQTDIGYGLRPEHPLQKAATGAAKANDATDMSFEDYAAFVADYTIEKASQISGVPAAKIEALAELYADPNTKVTSFWTMGFNQHTRGVWANNLAYNLHLLTGKISEPGNSPFSLTGQPSACGTAREVGTFSHRLPADMVVTNKKHRDIAEKIWKLPEGTIPDKPGYHAVLQSRMLKDGLLNAYWVQVNNNLQAGANANEETYPGFRNPDNFIVVSDAYPSVTALAADLILPTAMWVEKEGAYGNAERRTQFWHQLVSAPGQARSDLWQLMEFAKRFKIEEVWTEELLAKKPEVRGKTMYDVLYRNGQVDKYPSSDIEAGYLNDESKAFGYYVQKGLFEEYASFGRGHGHDLAPFDDYHRERGLRWPVVNGQETRWRFREGSDPYVQQGAGVQFYGFPDGRARIFALPYEPAAEAPDAEFPFWLSTGRVLEHWHSGTMTRRVPELYKAFPEAVCFMHPDDAAELKLRRGDEIKVESRRGFIRTRVETRGRNKPPRGLVFVPWFDEAQLINKVTLDATDPISLQTDYKKCAVRIERVTAS</sequence>
<accession>Q21AR4</accession>
<protein>
    <recommendedName>
        <fullName evidence="1">Periplasmic nitrate reductase</fullName>
        <ecNumber evidence="1">1.9.6.1</ecNumber>
    </recommendedName>
</protein>
<gene>
    <name evidence="1" type="primary">napA</name>
    <name type="ordered locus">RPC_0952</name>
</gene>
<reference key="1">
    <citation type="submission" date="2006-03" db="EMBL/GenBank/DDBJ databases">
        <title>Complete sequence of Rhodopseudomonas palustris BisB18.</title>
        <authorList>
            <consortium name="US DOE Joint Genome Institute"/>
            <person name="Copeland A."/>
            <person name="Lucas S."/>
            <person name="Lapidus A."/>
            <person name="Barry K."/>
            <person name="Detter J.C."/>
            <person name="Glavina del Rio T."/>
            <person name="Hammon N."/>
            <person name="Israni S."/>
            <person name="Dalin E."/>
            <person name="Tice H."/>
            <person name="Pitluck S."/>
            <person name="Chain P."/>
            <person name="Malfatti S."/>
            <person name="Shin M."/>
            <person name="Vergez L."/>
            <person name="Schmutz J."/>
            <person name="Larimer F."/>
            <person name="Land M."/>
            <person name="Hauser L."/>
            <person name="Pelletier D.A."/>
            <person name="Kyrpides N."/>
            <person name="Anderson I."/>
            <person name="Oda Y."/>
            <person name="Harwood C.S."/>
            <person name="Richardson P."/>
        </authorList>
    </citation>
    <scope>NUCLEOTIDE SEQUENCE [LARGE SCALE GENOMIC DNA]</scope>
    <source>
        <strain>BisB18</strain>
    </source>
</reference>
<dbReference type="EC" id="1.9.6.1" evidence="1"/>
<dbReference type="EMBL" id="CP000301">
    <property type="protein sequence ID" value="ABD86522.1"/>
    <property type="molecule type" value="Genomic_DNA"/>
</dbReference>
<dbReference type="SMR" id="Q21AR4"/>
<dbReference type="STRING" id="316056.RPC_0952"/>
<dbReference type="KEGG" id="rpc:RPC_0952"/>
<dbReference type="eggNOG" id="COG0243">
    <property type="taxonomic scope" value="Bacteria"/>
</dbReference>
<dbReference type="HOGENOM" id="CLU_000422_13_4_5"/>
<dbReference type="OrthoDB" id="9816402at2"/>
<dbReference type="GO" id="GO:0016020">
    <property type="term" value="C:membrane"/>
    <property type="evidence" value="ECO:0007669"/>
    <property type="project" value="TreeGrafter"/>
</dbReference>
<dbReference type="GO" id="GO:0009325">
    <property type="term" value="C:nitrate reductase complex"/>
    <property type="evidence" value="ECO:0007669"/>
    <property type="project" value="TreeGrafter"/>
</dbReference>
<dbReference type="GO" id="GO:0042597">
    <property type="term" value="C:periplasmic space"/>
    <property type="evidence" value="ECO:0007669"/>
    <property type="project" value="UniProtKB-SubCell"/>
</dbReference>
<dbReference type="GO" id="GO:0051539">
    <property type="term" value="F:4 iron, 4 sulfur cluster binding"/>
    <property type="evidence" value="ECO:0007669"/>
    <property type="project" value="UniProtKB-KW"/>
</dbReference>
<dbReference type="GO" id="GO:0009055">
    <property type="term" value="F:electron transfer activity"/>
    <property type="evidence" value="ECO:0007669"/>
    <property type="project" value="UniProtKB-UniRule"/>
</dbReference>
<dbReference type="GO" id="GO:0005506">
    <property type="term" value="F:iron ion binding"/>
    <property type="evidence" value="ECO:0007669"/>
    <property type="project" value="UniProtKB-UniRule"/>
</dbReference>
<dbReference type="GO" id="GO:0030151">
    <property type="term" value="F:molybdenum ion binding"/>
    <property type="evidence" value="ECO:0007669"/>
    <property type="project" value="InterPro"/>
</dbReference>
<dbReference type="GO" id="GO:0043546">
    <property type="term" value="F:molybdopterin cofactor binding"/>
    <property type="evidence" value="ECO:0007669"/>
    <property type="project" value="InterPro"/>
</dbReference>
<dbReference type="GO" id="GO:0050140">
    <property type="term" value="F:nitrate reductase (cytochrome) activity"/>
    <property type="evidence" value="ECO:0007669"/>
    <property type="project" value="UniProtKB-EC"/>
</dbReference>
<dbReference type="GO" id="GO:0045333">
    <property type="term" value="P:cellular respiration"/>
    <property type="evidence" value="ECO:0007669"/>
    <property type="project" value="UniProtKB-ARBA"/>
</dbReference>
<dbReference type="GO" id="GO:0006777">
    <property type="term" value="P:Mo-molybdopterin cofactor biosynthetic process"/>
    <property type="evidence" value="ECO:0007669"/>
    <property type="project" value="UniProtKB-UniRule"/>
</dbReference>
<dbReference type="GO" id="GO:0042128">
    <property type="term" value="P:nitrate assimilation"/>
    <property type="evidence" value="ECO:0007669"/>
    <property type="project" value="UniProtKB-UniRule"/>
</dbReference>
<dbReference type="CDD" id="cd02791">
    <property type="entry name" value="MopB_CT_Nitrate-R-NapA-like"/>
    <property type="match status" value="1"/>
</dbReference>
<dbReference type="CDD" id="cd02754">
    <property type="entry name" value="MopB_Nitrate-R-NapA-like"/>
    <property type="match status" value="1"/>
</dbReference>
<dbReference type="FunFam" id="2.40.40.20:FF:000005">
    <property type="entry name" value="Periplasmic nitrate reductase"/>
    <property type="match status" value="1"/>
</dbReference>
<dbReference type="Gene3D" id="2.40.40.20">
    <property type="match status" value="1"/>
</dbReference>
<dbReference type="Gene3D" id="3.30.200.210">
    <property type="match status" value="1"/>
</dbReference>
<dbReference type="Gene3D" id="3.40.50.740">
    <property type="match status" value="1"/>
</dbReference>
<dbReference type="Gene3D" id="3.40.228.10">
    <property type="entry name" value="Dimethylsulfoxide Reductase, domain 2"/>
    <property type="match status" value="1"/>
</dbReference>
<dbReference type="HAMAP" id="MF_01630">
    <property type="entry name" value="Nitrate_reduct_NapA"/>
    <property type="match status" value="1"/>
</dbReference>
<dbReference type="InterPro" id="IPR009010">
    <property type="entry name" value="Asp_de-COase-like_dom_sf"/>
</dbReference>
<dbReference type="InterPro" id="IPR041957">
    <property type="entry name" value="CT_Nitrate-R-NapA-like"/>
</dbReference>
<dbReference type="InterPro" id="IPR006657">
    <property type="entry name" value="MoPterin_dinucl-bd_dom"/>
</dbReference>
<dbReference type="InterPro" id="IPR006656">
    <property type="entry name" value="Mopterin_OxRdtase"/>
</dbReference>
<dbReference type="InterPro" id="IPR006963">
    <property type="entry name" value="Mopterin_OxRdtase_4Fe-4S_dom"/>
</dbReference>
<dbReference type="InterPro" id="IPR027467">
    <property type="entry name" value="MopterinOxRdtase_cofactor_BS"/>
</dbReference>
<dbReference type="InterPro" id="IPR010051">
    <property type="entry name" value="Periplasm_NO3_reductase_lsu"/>
</dbReference>
<dbReference type="InterPro" id="IPR050123">
    <property type="entry name" value="Prok_molybdopt-oxidoreductase"/>
</dbReference>
<dbReference type="InterPro" id="IPR006311">
    <property type="entry name" value="TAT_signal"/>
</dbReference>
<dbReference type="NCBIfam" id="TIGR01706">
    <property type="entry name" value="NAPA"/>
    <property type="match status" value="1"/>
</dbReference>
<dbReference type="NCBIfam" id="NF010055">
    <property type="entry name" value="PRK13532.1"/>
    <property type="match status" value="1"/>
</dbReference>
<dbReference type="PANTHER" id="PTHR43105:SF11">
    <property type="entry name" value="PERIPLASMIC NITRATE REDUCTASE"/>
    <property type="match status" value="1"/>
</dbReference>
<dbReference type="PANTHER" id="PTHR43105">
    <property type="entry name" value="RESPIRATORY NITRATE REDUCTASE"/>
    <property type="match status" value="1"/>
</dbReference>
<dbReference type="Pfam" id="PF04879">
    <property type="entry name" value="Molybdop_Fe4S4"/>
    <property type="match status" value="1"/>
</dbReference>
<dbReference type="Pfam" id="PF00384">
    <property type="entry name" value="Molybdopterin"/>
    <property type="match status" value="1"/>
</dbReference>
<dbReference type="Pfam" id="PF01568">
    <property type="entry name" value="Molydop_binding"/>
    <property type="match status" value="1"/>
</dbReference>
<dbReference type="SMART" id="SM00926">
    <property type="entry name" value="Molybdop_Fe4S4"/>
    <property type="match status" value="1"/>
</dbReference>
<dbReference type="SUPFAM" id="SSF50692">
    <property type="entry name" value="ADC-like"/>
    <property type="match status" value="1"/>
</dbReference>
<dbReference type="SUPFAM" id="SSF53706">
    <property type="entry name" value="Formate dehydrogenase/DMSO reductase, domains 1-3"/>
    <property type="match status" value="1"/>
</dbReference>
<dbReference type="PROSITE" id="PS51669">
    <property type="entry name" value="4FE4S_MOW_BIS_MGD"/>
    <property type="match status" value="1"/>
</dbReference>
<dbReference type="PROSITE" id="PS00551">
    <property type="entry name" value="MOLYBDOPTERIN_PROK_1"/>
    <property type="match status" value="1"/>
</dbReference>
<dbReference type="PROSITE" id="PS51318">
    <property type="entry name" value="TAT"/>
    <property type="match status" value="1"/>
</dbReference>